<feature type="chain" id="PRO_0000071698" description="ATP synthase subunit J, mitochondrial">
    <location>
        <begin position="1"/>
        <end position="60"/>
    </location>
</feature>
<feature type="transmembrane region" description="Helical" evidence="1">
    <location>
        <begin position="13"/>
        <end position="32"/>
    </location>
</feature>
<keyword id="KW-0066">ATP synthesis</keyword>
<keyword id="KW-0138">CF(0)</keyword>
<keyword id="KW-0375">Hydrogen ion transport</keyword>
<keyword id="KW-0406">Ion transport</keyword>
<keyword id="KW-0472">Membrane</keyword>
<keyword id="KW-0496">Mitochondrion</keyword>
<keyword id="KW-1185">Reference proteome</keyword>
<keyword id="KW-0812">Transmembrane</keyword>
<keyword id="KW-1133">Transmembrane helix</keyword>
<keyword id="KW-0813">Transport</keyword>
<name>ATP18_SCHPO</name>
<accession>O13931</accession>
<proteinExistence type="inferred from homology"/>
<dbReference type="EMBL" id="CU329670">
    <property type="protein sequence ID" value="CAB16882.1"/>
    <property type="molecule type" value="Genomic_DNA"/>
</dbReference>
<dbReference type="PIR" id="T38266">
    <property type="entry name" value="T38266"/>
</dbReference>
<dbReference type="RefSeq" id="NP_593183.1">
    <property type="nucleotide sequence ID" value="NM_001018579.2"/>
</dbReference>
<dbReference type="SMR" id="O13931"/>
<dbReference type="ComplexPortal" id="CPX-25764">
    <property type="entry name" value="Mitochondrial proton translocating ATP synthase complex"/>
</dbReference>
<dbReference type="FunCoup" id="O13931">
    <property type="interactions" value="83"/>
</dbReference>
<dbReference type="STRING" id="284812.O13931"/>
<dbReference type="PaxDb" id="4896-SPAC23C4.11.1"/>
<dbReference type="EnsemblFungi" id="SPAC23C4.11.1">
    <property type="protein sequence ID" value="SPAC23C4.11.1:pep"/>
    <property type="gene ID" value="SPAC23C4.11"/>
</dbReference>
<dbReference type="GeneID" id="2541918"/>
<dbReference type="KEGG" id="spo:2541918"/>
<dbReference type="PomBase" id="SPAC23C4.11">
    <property type="gene designation" value="atp18"/>
</dbReference>
<dbReference type="VEuPathDB" id="FungiDB:SPAC23C4.11"/>
<dbReference type="eggNOG" id="ENOG502RAAZ">
    <property type="taxonomic scope" value="Eukaryota"/>
</dbReference>
<dbReference type="HOGENOM" id="CLU_174950_1_1_1"/>
<dbReference type="InParanoid" id="O13931"/>
<dbReference type="OMA" id="KPMWPFY"/>
<dbReference type="PhylomeDB" id="O13931"/>
<dbReference type="PRO" id="PR:O13931"/>
<dbReference type="Proteomes" id="UP000002485">
    <property type="component" value="Chromosome I"/>
</dbReference>
<dbReference type="GO" id="GO:0099617">
    <property type="term" value="C:matrix side of mitochondrial inner membrane"/>
    <property type="evidence" value="ECO:0000305"/>
    <property type="project" value="PomBase"/>
</dbReference>
<dbReference type="GO" id="GO:0005739">
    <property type="term" value="C:mitochondrion"/>
    <property type="evidence" value="ECO:0007005"/>
    <property type="project" value="PomBase"/>
</dbReference>
<dbReference type="GO" id="GO:0045259">
    <property type="term" value="C:proton-transporting ATP synthase complex"/>
    <property type="evidence" value="ECO:0000266"/>
    <property type="project" value="PomBase"/>
</dbReference>
<dbReference type="GO" id="GO:0015078">
    <property type="term" value="F:proton transmembrane transporter activity"/>
    <property type="evidence" value="ECO:0007669"/>
    <property type="project" value="InterPro"/>
</dbReference>
<dbReference type="GO" id="GO:0015986">
    <property type="term" value="P:proton motive force-driven ATP synthesis"/>
    <property type="evidence" value="ECO:0000318"/>
    <property type="project" value="GO_Central"/>
</dbReference>
<dbReference type="GO" id="GO:0042776">
    <property type="term" value="P:proton motive force-driven mitochondrial ATP synthesis"/>
    <property type="evidence" value="ECO:0000266"/>
    <property type="project" value="PomBase"/>
</dbReference>
<dbReference type="InterPro" id="IPR006995">
    <property type="entry name" value="ATP_synth_F0_jsu"/>
</dbReference>
<dbReference type="PANTHER" id="PTHR28060">
    <property type="entry name" value="ATP SYNTHASE SUBUNIT J, MITOCHONDRIAL"/>
    <property type="match status" value="1"/>
</dbReference>
<dbReference type="PANTHER" id="PTHR28060:SF1">
    <property type="entry name" value="ATP SYNTHASE SUBUNIT J, MITOCHONDRIAL"/>
    <property type="match status" value="1"/>
</dbReference>
<dbReference type="Pfam" id="PF04911">
    <property type="entry name" value="ATP-synt_J"/>
    <property type="match status" value="1"/>
</dbReference>
<organism>
    <name type="scientific">Schizosaccharomyces pombe (strain 972 / ATCC 24843)</name>
    <name type="common">Fission yeast</name>
    <dbReference type="NCBI Taxonomy" id="284812"/>
    <lineage>
        <taxon>Eukaryota</taxon>
        <taxon>Fungi</taxon>
        <taxon>Dikarya</taxon>
        <taxon>Ascomycota</taxon>
        <taxon>Taphrinomycotina</taxon>
        <taxon>Schizosaccharomycetes</taxon>
        <taxon>Schizosaccharomycetales</taxon>
        <taxon>Schizosaccharomycetaceae</taxon>
        <taxon>Schizosaccharomyces</taxon>
    </lineage>
</organism>
<evidence type="ECO:0000255" key="1"/>
<evidence type="ECO:0000305" key="2"/>
<reference key="1">
    <citation type="journal article" date="2002" name="Nature">
        <title>The genome sequence of Schizosaccharomyces pombe.</title>
        <authorList>
            <person name="Wood V."/>
            <person name="Gwilliam R."/>
            <person name="Rajandream M.A."/>
            <person name="Lyne M.H."/>
            <person name="Lyne R."/>
            <person name="Stewart A."/>
            <person name="Sgouros J.G."/>
            <person name="Peat N."/>
            <person name="Hayles J."/>
            <person name="Baker S.G."/>
            <person name="Basham D."/>
            <person name="Bowman S."/>
            <person name="Brooks K."/>
            <person name="Brown D."/>
            <person name="Brown S."/>
            <person name="Chillingworth T."/>
            <person name="Churcher C.M."/>
            <person name="Collins M."/>
            <person name="Connor R."/>
            <person name="Cronin A."/>
            <person name="Davis P."/>
            <person name="Feltwell T."/>
            <person name="Fraser A."/>
            <person name="Gentles S."/>
            <person name="Goble A."/>
            <person name="Hamlin N."/>
            <person name="Harris D.E."/>
            <person name="Hidalgo J."/>
            <person name="Hodgson G."/>
            <person name="Holroyd S."/>
            <person name="Hornsby T."/>
            <person name="Howarth S."/>
            <person name="Huckle E.J."/>
            <person name="Hunt S."/>
            <person name="Jagels K."/>
            <person name="James K.D."/>
            <person name="Jones L."/>
            <person name="Jones M."/>
            <person name="Leather S."/>
            <person name="McDonald S."/>
            <person name="McLean J."/>
            <person name="Mooney P."/>
            <person name="Moule S."/>
            <person name="Mungall K.L."/>
            <person name="Murphy L.D."/>
            <person name="Niblett D."/>
            <person name="Odell C."/>
            <person name="Oliver K."/>
            <person name="O'Neil S."/>
            <person name="Pearson D."/>
            <person name="Quail M.A."/>
            <person name="Rabbinowitsch E."/>
            <person name="Rutherford K.M."/>
            <person name="Rutter S."/>
            <person name="Saunders D."/>
            <person name="Seeger K."/>
            <person name="Sharp S."/>
            <person name="Skelton J."/>
            <person name="Simmonds M.N."/>
            <person name="Squares R."/>
            <person name="Squares S."/>
            <person name="Stevens K."/>
            <person name="Taylor K."/>
            <person name="Taylor R.G."/>
            <person name="Tivey A."/>
            <person name="Walsh S.V."/>
            <person name="Warren T."/>
            <person name="Whitehead S."/>
            <person name="Woodward J.R."/>
            <person name="Volckaert G."/>
            <person name="Aert R."/>
            <person name="Robben J."/>
            <person name="Grymonprez B."/>
            <person name="Weltjens I."/>
            <person name="Vanstreels E."/>
            <person name="Rieger M."/>
            <person name="Schaefer M."/>
            <person name="Mueller-Auer S."/>
            <person name="Gabel C."/>
            <person name="Fuchs M."/>
            <person name="Duesterhoeft A."/>
            <person name="Fritzc C."/>
            <person name="Holzer E."/>
            <person name="Moestl D."/>
            <person name="Hilbert H."/>
            <person name="Borzym K."/>
            <person name="Langer I."/>
            <person name="Beck A."/>
            <person name="Lehrach H."/>
            <person name="Reinhardt R."/>
            <person name="Pohl T.M."/>
            <person name="Eger P."/>
            <person name="Zimmermann W."/>
            <person name="Wedler H."/>
            <person name="Wambutt R."/>
            <person name="Purnelle B."/>
            <person name="Goffeau A."/>
            <person name="Cadieu E."/>
            <person name="Dreano S."/>
            <person name="Gloux S."/>
            <person name="Lelaure V."/>
            <person name="Mottier S."/>
            <person name="Galibert F."/>
            <person name="Aves S.J."/>
            <person name="Xiang Z."/>
            <person name="Hunt C."/>
            <person name="Moore K."/>
            <person name="Hurst S.M."/>
            <person name="Lucas M."/>
            <person name="Rochet M."/>
            <person name="Gaillardin C."/>
            <person name="Tallada V.A."/>
            <person name="Garzon A."/>
            <person name="Thode G."/>
            <person name="Daga R.R."/>
            <person name="Cruzado L."/>
            <person name="Jimenez J."/>
            <person name="Sanchez M."/>
            <person name="del Rey F."/>
            <person name="Benito J."/>
            <person name="Dominguez A."/>
            <person name="Revuelta J.L."/>
            <person name="Moreno S."/>
            <person name="Armstrong J."/>
            <person name="Forsburg S.L."/>
            <person name="Cerutti L."/>
            <person name="Lowe T."/>
            <person name="McCombie W.R."/>
            <person name="Paulsen I."/>
            <person name="Potashkin J."/>
            <person name="Shpakovski G.V."/>
            <person name="Ussery D."/>
            <person name="Barrell B.G."/>
            <person name="Nurse P."/>
        </authorList>
    </citation>
    <scope>NUCLEOTIDE SEQUENCE [LARGE SCALE GENOMIC DNA]</scope>
    <source>
        <strain>972 / ATCC 24843</strain>
    </source>
</reference>
<sequence length="60" mass="6805">MSFFGLKRYSTPILKPMLPFFLGGAIVFYGTVKLRDAMMDSAEYRNDPRNPKAGKYGSDH</sequence>
<comment type="function">
    <text>Mitochondrial membrane ATP synthase (F(1)F(0) ATP synthase or Complex V) produces ATP from ADP in the presence of a proton gradient across the membrane which is generated by electron transport complexes of the respiratory chain. F-type ATPases consist of two structural domains, F(1) - containing the extramembraneous catalytic core and F(0) - containing the membrane proton channel, linked together by a central stalk and a peripheral stalk. During catalysis, ATP synthesis in the catalytic domain of F(1) is coupled via a rotary mechanism of the central stalk subunits to proton translocation. Part of the complex F(0) domain. Minor subunit located with subunit a in the membrane.</text>
</comment>
<comment type="subunit">
    <text>F-type ATPases have 2 components, CF(1) - the catalytic core - and CF(0) - the membrane proton channel. In yeast, the dimeric form of ATP synthase consists of 17 polypeptides: alpha, beta, gamma, delta, epsilon, 4 (B), 5 (OSCP), 6 (A), 8, 9 (C), d, E (Tim11), f, g, h, i/j and k.</text>
</comment>
<comment type="subcellular location">
    <subcellularLocation>
        <location evidence="2">Mitochondrion membrane</location>
        <topology evidence="2">Single-pass membrane protein</topology>
    </subcellularLocation>
</comment>
<comment type="similarity">
    <text evidence="2">Belongs to the ATPase j subunit family.</text>
</comment>
<gene>
    <name type="primary">atp18</name>
    <name type="ORF">SPAC23C4.11</name>
</gene>
<protein>
    <recommendedName>
        <fullName>ATP synthase subunit J, mitochondrial</fullName>
    </recommendedName>
</protein>